<accession>P59746</accession>
<feature type="chain" id="PRO_0000051601" description="Chitooligosaccharide deacetylase">
    <location>
        <begin position="1"/>
        <end position="252"/>
    </location>
</feature>
<feature type="binding site" evidence="1">
    <location>
        <position position="61"/>
    </location>
    <ligand>
        <name>Mg(2+)</name>
        <dbReference type="ChEBI" id="CHEBI:18420"/>
    </ligand>
</feature>
<feature type="binding site" evidence="1">
    <location>
        <position position="125"/>
    </location>
    <ligand>
        <name>Mg(2+)</name>
        <dbReference type="ChEBI" id="CHEBI:18420"/>
    </ligand>
</feature>
<organism>
    <name type="scientific">Shigella flexneri</name>
    <dbReference type="NCBI Taxonomy" id="623"/>
    <lineage>
        <taxon>Bacteria</taxon>
        <taxon>Pseudomonadati</taxon>
        <taxon>Pseudomonadota</taxon>
        <taxon>Gammaproteobacteria</taxon>
        <taxon>Enterobacterales</taxon>
        <taxon>Enterobacteriaceae</taxon>
        <taxon>Shigella</taxon>
    </lineage>
</organism>
<name>CHBG_SHIFL</name>
<proteinExistence type="inferred from homology"/>
<dbReference type="EC" id="3.5.1.105" evidence="1"/>
<dbReference type="EMBL" id="AE005674">
    <property type="protein sequence ID" value="AAN43086.1"/>
    <property type="molecule type" value="Genomic_DNA"/>
</dbReference>
<dbReference type="EMBL" id="AE014073">
    <property type="protein sequence ID" value="AAP16978.1"/>
    <property type="molecule type" value="Genomic_DNA"/>
</dbReference>
<dbReference type="RefSeq" id="WP_000440442.1">
    <property type="nucleotide sequence ID" value="NZ_WPGS01000162.1"/>
</dbReference>
<dbReference type="SMR" id="P59746"/>
<dbReference type="STRING" id="198214.SF1495"/>
<dbReference type="PaxDb" id="198214-SF1495"/>
<dbReference type="DNASU" id="1077981"/>
<dbReference type="KEGG" id="sfl:SF1495"/>
<dbReference type="KEGG" id="sfx:S1612"/>
<dbReference type="PATRIC" id="fig|198214.7.peg.1765"/>
<dbReference type="HOGENOM" id="CLU_064244_4_1_6"/>
<dbReference type="UniPathway" id="UPA00349"/>
<dbReference type="Proteomes" id="UP000001006">
    <property type="component" value="Chromosome"/>
</dbReference>
<dbReference type="Proteomes" id="UP000002673">
    <property type="component" value="Chromosome"/>
</dbReference>
<dbReference type="GO" id="GO:0005737">
    <property type="term" value="C:cytoplasm"/>
    <property type="evidence" value="ECO:0007669"/>
    <property type="project" value="UniProtKB-SubCell"/>
</dbReference>
<dbReference type="GO" id="GO:0036311">
    <property type="term" value="F:chitin disaccharide deacetylase activity"/>
    <property type="evidence" value="ECO:0007669"/>
    <property type="project" value="UniProtKB-UniRule"/>
</dbReference>
<dbReference type="GO" id="GO:0019213">
    <property type="term" value="F:deacetylase activity"/>
    <property type="evidence" value="ECO:0007669"/>
    <property type="project" value="TreeGrafter"/>
</dbReference>
<dbReference type="GO" id="GO:0046872">
    <property type="term" value="F:metal ion binding"/>
    <property type="evidence" value="ECO:0007669"/>
    <property type="project" value="UniProtKB-KW"/>
</dbReference>
<dbReference type="GO" id="GO:0006032">
    <property type="term" value="P:chitin catabolic process"/>
    <property type="evidence" value="ECO:0007669"/>
    <property type="project" value="UniProtKB-UniPathway"/>
</dbReference>
<dbReference type="GO" id="GO:0052777">
    <property type="term" value="P:diacetylchitobiose catabolic process"/>
    <property type="evidence" value="ECO:0007669"/>
    <property type="project" value="UniProtKB-UniRule"/>
</dbReference>
<dbReference type="GO" id="GO:0000272">
    <property type="term" value="P:polysaccharide catabolic process"/>
    <property type="evidence" value="ECO:0007669"/>
    <property type="project" value="UniProtKB-UniRule"/>
</dbReference>
<dbReference type="CDD" id="cd10803">
    <property type="entry name" value="YdjC_EF3048_like"/>
    <property type="match status" value="1"/>
</dbReference>
<dbReference type="FunFam" id="3.20.20.370:FF:000001">
    <property type="entry name" value="Chitooligosaccharide deacetylase"/>
    <property type="match status" value="1"/>
</dbReference>
<dbReference type="Gene3D" id="3.20.20.370">
    <property type="entry name" value="Glycoside hydrolase/deacetylase"/>
    <property type="match status" value="1"/>
</dbReference>
<dbReference type="HAMAP" id="MF_01246">
    <property type="entry name" value="COD"/>
    <property type="match status" value="1"/>
</dbReference>
<dbReference type="InterPro" id="IPR022948">
    <property type="entry name" value="COD_ChbG_bac"/>
</dbReference>
<dbReference type="InterPro" id="IPR011330">
    <property type="entry name" value="Glyco_hydro/deAcase_b/a-brl"/>
</dbReference>
<dbReference type="InterPro" id="IPR006879">
    <property type="entry name" value="YdjC-like"/>
</dbReference>
<dbReference type="NCBIfam" id="NF002559">
    <property type="entry name" value="PRK02134.1"/>
    <property type="match status" value="1"/>
</dbReference>
<dbReference type="PANTHER" id="PTHR31609:SF1">
    <property type="entry name" value="CARBOHYDRATE DEACETYLASE"/>
    <property type="match status" value="1"/>
</dbReference>
<dbReference type="PANTHER" id="PTHR31609">
    <property type="entry name" value="YDJC DEACETYLASE FAMILY MEMBER"/>
    <property type="match status" value="1"/>
</dbReference>
<dbReference type="Pfam" id="PF04794">
    <property type="entry name" value="YdjC"/>
    <property type="match status" value="1"/>
</dbReference>
<dbReference type="SUPFAM" id="SSF88713">
    <property type="entry name" value="Glycoside hydrolase/deacetylase"/>
    <property type="match status" value="1"/>
</dbReference>
<comment type="function">
    <text evidence="1">Involved in the degradation of chitin. ChbG is essential for growth on the acetylated chitooligosaccharides chitobiose and chitotriose but is dispensable for growth on cellobiose and chitosan dimer, the deacetylated form of chitobiose. Deacetylation of chitobiose-6-P and chitotriose-6-P is necessary for both the activation of the chb promoter by the regulatory protein ChbR and the hydrolysis of phosphorylated beta-glucosides by the phospho-beta-glucosidase ChbF. Catalyzes the removal of only one acetyl group from chitobiose-6-P to yield monoacetylchitobiose-6-P, the inducer of ChbR and the substrate of ChbF.</text>
</comment>
<comment type="catalytic activity">
    <reaction evidence="1">
        <text>N,N'-diacetylchitobiose + H2O = N-acetyl-beta-D-glucosaminyl-(1-&gt;4)-D-glucosamine + acetate</text>
        <dbReference type="Rhea" id="RHEA:27469"/>
        <dbReference type="ChEBI" id="CHEBI:15377"/>
        <dbReference type="ChEBI" id="CHEBI:28681"/>
        <dbReference type="ChEBI" id="CHEBI:30089"/>
        <dbReference type="ChEBI" id="CHEBI:59910"/>
        <dbReference type="EC" id="3.5.1.105"/>
    </reaction>
</comment>
<comment type="catalytic activity">
    <reaction evidence="1">
        <text>diacetylchitobiose-6'-phosphate + H2O = N'-monoacetylchitobiose-6'-phosphate + acetate</text>
        <dbReference type="Rhea" id="RHEA:35083"/>
        <dbReference type="ChEBI" id="CHEBI:15377"/>
        <dbReference type="ChEBI" id="CHEBI:30089"/>
        <dbReference type="ChEBI" id="CHEBI:64883"/>
        <dbReference type="ChEBI" id="CHEBI:71315"/>
    </reaction>
</comment>
<comment type="cofactor">
    <cofactor evidence="1">
        <name>Mg(2+)</name>
        <dbReference type="ChEBI" id="CHEBI:18420"/>
    </cofactor>
</comment>
<comment type="pathway">
    <text evidence="1">Glycan degradation; chitin degradation.</text>
</comment>
<comment type="subunit">
    <text evidence="1">Homodimer.</text>
</comment>
<comment type="subcellular location">
    <subcellularLocation>
        <location evidence="1">Cytoplasm</location>
    </subcellularLocation>
</comment>
<comment type="similarity">
    <text evidence="1">Belongs to the YdjC deacetylase family. ChbG subfamily.</text>
</comment>
<protein>
    <recommendedName>
        <fullName evidence="1">Chitooligosaccharide deacetylase</fullName>
        <shortName evidence="1">COD</shortName>
        <ecNumber evidence="1">3.5.1.105</ecNumber>
    </recommendedName>
    <alternativeName>
        <fullName evidence="1">Chitin disaccharide deacetylase</fullName>
    </alternativeName>
    <alternativeName>
        <fullName evidence="1">Chitobiose deacetylase</fullName>
    </alternativeName>
    <alternativeName>
        <fullName evidence="1">Chitobiose-6P deacetylase</fullName>
    </alternativeName>
    <alternativeName>
        <fullName evidence="1">Chitotriose deacetylase</fullName>
    </alternativeName>
    <alternativeName>
        <fullName evidence="1">Chitotriose-6P deacetylase</fullName>
    </alternativeName>
</protein>
<evidence type="ECO:0000255" key="1">
    <source>
        <dbReference type="HAMAP-Rule" id="MF_01246"/>
    </source>
</evidence>
<reference key="1">
    <citation type="journal article" date="2002" name="Nucleic Acids Res.">
        <title>Genome sequence of Shigella flexneri 2a: insights into pathogenicity through comparison with genomes of Escherichia coli K12 and O157.</title>
        <authorList>
            <person name="Jin Q."/>
            <person name="Yuan Z."/>
            <person name="Xu J."/>
            <person name="Wang Y."/>
            <person name="Shen Y."/>
            <person name="Lu W."/>
            <person name="Wang J."/>
            <person name="Liu H."/>
            <person name="Yang J."/>
            <person name="Yang F."/>
            <person name="Zhang X."/>
            <person name="Zhang J."/>
            <person name="Yang G."/>
            <person name="Wu H."/>
            <person name="Qu D."/>
            <person name="Dong J."/>
            <person name="Sun L."/>
            <person name="Xue Y."/>
            <person name="Zhao A."/>
            <person name="Gao Y."/>
            <person name="Zhu J."/>
            <person name="Kan B."/>
            <person name="Ding K."/>
            <person name="Chen S."/>
            <person name="Cheng H."/>
            <person name="Yao Z."/>
            <person name="He B."/>
            <person name="Chen R."/>
            <person name="Ma D."/>
            <person name="Qiang B."/>
            <person name="Wen Y."/>
            <person name="Hou Y."/>
            <person name="Yu J."/>
        </authorList>
    </citation>
    <scope>NUCLEOTIDE SEQUENCE [LARGE SCALE GENOMIC DNA]</scope>
    <source>
        <strain>301 / Serotype 2a</strain>
    </source>
</reference>
<reference key="2">
    <citation type="journal article" date="2003" name="Infect. Immun.">
        <title>Complete genome sequence and comparative genomics of Shigella flexneri serotype 2a strain 2457T.</title>
        <authorList>
            <person name="Wei J."/>
            <person name="Goldberg M.B."/>
            <person name="Burland V."/>
            <person name="Venkatesan M.M."/>
            <person name="Deng W."/>
            <person name="Fournier G."/>
            <person name="Mayhew G.F."/>
            <person name="Plunkett G. III"/>
            <person name="Rose D.J."/>
            <person name="Darling A."/>
            <person name="Mau B."/>
            <person name="Perna N.T."/>
            <person name="Payne S.M."/>
            <person name="Runyen-Janecky L.J."/>
            <person name="Zhou S."/>
            <person name="Schwartz D.C."/>
            <person name="Blattner F.R."/>
        </authorList>
    </citation>
    <scope>NUCLEOTIDE SEQUENCE [LARGE SCALE GENOMIC DNA]</scope>
    <source>
        <strain>ATCC 700930 / 2457T / Serotype 2a</strain>
    </source>
</reference>
<keyword id="KW-0119">Carbohydrate metabolism</keyword>
<keyword id="KW-0146">Chitin degradation</keyword>
<keyword id="KW-0963">Cytoplasm</keyword>
<keyword id="KW-0378">Hydrolase</keyword>
<keyword id="KW-0460">Magnesium</keyword>
<keyword id="KW-0479">Metal-binding</keyword>
<keyword id="KW-0624">Polysaccharide degradation</keyword>
<keyword id="KW-1185">Reference proteome</keyword>
<sequence>MERLLIVNADDFGLSKGQNYGIIEACRNGIVTSTTALVNGQAIDHAVQLSRDEPSLAIGMHFVLTMGKPLTAMPGLTRDGVLGKWIWQLAEEDALPLEEITQELASQYLRFIELFGRKPTHLDSHHHVHMFPQIFPIVARFAAEEGIALRIDRQPLSNAGDLPANLRSSQGFSSAFYGEEISEALFLQVLDDASHRGDPSLEVMCHPAFIDNTIRQSAYCFPRLTELEVLTSASLKYAIAERGYRLGSYLDV</sequence>
<gene>
    <name evidence="1" type="primary">chbG</name>
    <name type="ordered locus">SF1495</name>
    <name type="ordered locus">S1612</name>
</gene>